<reference key="1">
    <citation type="submission" date="2005-03" db="EMBL/GenBank/DDBJ databases">
        <title>Brevibacillus brevis strain 47, complete genome.</title>
        <authorList>
            <person name="Hosoyama A."/>
            <person name="Yamada R."/>
            <person name="Hongo Y."/>
            <person name="Terui Y."/>
            <person name="Ankai A."/>
            <person name="Masuyama W."/>
            <person name="Sekiguchi M."/>
            <person name="Takeda T."/>
            <person name="Asano K."/>
            <person name="Ohji S."/>
            <person name="Ichikawa N."/>
            <person name="Narita S."/>
            <person name="Aoki N."/>
            <person name="Miura H."/>
            <person name="Matsushita S."/>
            <person name="Sekigawa T."/>
            <person name="Yamagata H."/>
            <person name="Yoshikawa H."/>
            <person name="Udaka S."/>
            <person name="Tanikawa S."/>
            <person name="Fujita N."/>
        </authorList>
    </citation>
    <scope>NUCLEOTIDE SEQUENCE [LARGE SCALE GENOMIC DNA]</scope>
    <source>
        <strain>47 / JCM 6285 / NBRC 100599</strain>
    </source>
</reference>
<sequence length="62" mass="6913">MARRCFVTGKSAKAGNARSHSMRATRRTWGVNVQKVRILVNGKPKRVYVSTRALKSGLVTRV</sequence>
<proteinExistence type="inferred from homology"/>
<gene>
    <name evidence="1" type="primary">rpmB</name>
    <name type="ordered locus">BBR47_37140</name>
</gene>
<organism>
    <name type="scientific">Brevibacillus brevis (strain 47 / JCM 6285 / NBRC 100599)</name>
    <dbReference type="NCBI Taxonomy" id="358681"/>
    <lineage>
        <taxon>Bacteria</taxon>
        <taxon>Bacillati</taxon>
        <taxon>Bacillota</taxon>
        <taxon>Bacilli</taxon>
        <taxon>Bacillales</taxon>
        <taxon>Paenibacillaceae</taxon>
        <taxon>Brevibacillus</taxon>
    </lineage>
</organism>
<feature type="chain" id="PRO_1000195907" description="Large ribosomal subunit protein bL28">
    <location>
        <begin position="1"/>
        <end position="62"/>
    </location>
</feature>
<feature type="region of interest" description="Disordered" evidence="2">
    <location>
        <begin position="1"/>
        <end position="23"/>
    </location>
</feature>
<evidence type="ECO:0000255" key="1">
    <source>
        <dbReference type="HAMAP-Rule" id="MF_00373"/>
    </source>
</evidence>
<evidence type="ECO:0000256" key="2">
    <source>
        <dbReference type="SAM" id="MobiDB-lite"/>
    </source>
</evidence>
<evidence type="ECO:0000305" key="3"/>
<comment type="similarity">
    <text evidence="1">Belongs to the bacterial ribosomal protein bL28 family.</text>
</comment>
<keyword id="KW-1185">Reference proteome</keyword>
<keyword id="KW-0687">Ribonucleoprotein</keyword>
<keyword id="KW-0689">Ribosomal protein</keyword>
<accession>C0ZFY2</accession>
<name>RL28_BREBN</name>
<dbReference type="EMBL" id="AP008955">
    <property type="protein sequence ID" value="BAH44691.1"/>
    <property type="molecule type" value="Genomic_DNA"/>
</dbReference>
<dbReference type="RefSeq" id="WP_005831020.1">
    <property type="nucleotide sequence ID" value="NC_012491.1"/>
</dbReference>
<dbReference type="SMR" id="C0ZFY2"/>
<dbReference type="STRING" id="358681.BBR47_37140"/>
<dbReference type="GeneID" id="95752009"/>
<dbReference type="KEGG" id="bbe:BBR47_37140"/>
<dbReference type="eggNOG" id="COG0227">
    <property type="taxonomic scope" value="Bacteria"/>
</dbReference>
<dbReference type="HOGENOM" id="CLU_064548_7_1_9"/>
<dbReference type="Proteomes" id="UP000001877">
    <property type="component" value="Chromosome"/>
</dbReference>
<dbReference type="GO" id="GO:1990904">
    <property type="term" value="C:ribonucleoprotein complex"/>
    <property type="evidence" value="ECO:0007669"/>
    <property type="project" value="UniProtKB-KW"/>
</dbReference>
<dbReference type="GO" id="GO:0005840">
    <property type="term" value="C:ribosome"/>
    <property type="evidence" value="ECO:0007669"/>
    <property type="project" value="UniProtKB-KW"/>
</dbReference>
<dbReference type="GO" id="GO:0003735">
    <property type="term" value="F:structural constituent of ribosome"/>
    <property type="evidence" value="ECO:0007669"/>
    <property type="project" value="InterPro"/>
</dbReference>
<dbReference type="GO" id="GO:0006412">
    <property type="term" value="P:translation"/>
    <property type="evidence" value="ECO:0007669"/>
    <property type="project" value="UniProtKB-UniRule"/>
</dbReference>
<dbReference type="Gene3D" id="2.30.170.40">
    <property type="entry name" value="Ribosomal protein L28/L24"/>
    <property type="match status" value="1"/>
</dbReference>
<dbReference type="HAMAP" id="MF_00373">
    <property type="entry name" value="Ribosomal_bL28"/>
    <property type="match status" value="1"/>
</dbReference>
<dbReference type="InterPro" id="IPR050096">
    <property type="entry name" value="Bacterial_rp_bL28"/>
</dbReference>
<dbReference type="InterPro" id="IPR026569">
    <property type="entry name" value="Ribosomal_bL28"/>
</dbReference>
<dbReference type="InterPro" id="IPR034704">
    <property type="entry name" value="Ribosomal_bL28/bL31-like_sf"/>
</dbReference>
<dbReference type="InterPro" id="IPR001383">
    <property type="entry name" value="Ribosomal_bL28_bact-type"/>
</dbReference>
<dbReference type="InterPro" id="IPR037147">
    <property type="entry name" value="Ribosomal_bL28_sf"/>
</dbReference>
<dbReference type="NCBIfam" id="TIGR00009">
    <property type="entry name" value="L28"/>
    <property type="match status" value="1"/>
</dbReference>
<dbReference type="PANTHER" id="PTHR39080">
    <property type="entry name" value="50S RIBOSOMAL PROTEIN L28"/>
    <property type="match status" value="1"/>
</dbReference>
<dbReference type="PANTHER" id="PTHR39080:SF1">
    <property type="entry name" value="LARGE RIBOSOMAL SUBUNIT PROTEIN BL28A"/>
    <property type="match status" value="1"/>
</dbReference>
<dbReference type="Pfam" id="PF00830">
    <property type="entry name" value="Ribosomal_L28"/>
    <property type="match status" value="1"/>
</dbReference>
<dbReference type="SUPFAM" id="SSF143800">
    <property type="entry name" value="L28p-like"/>
    <property type="match status" value="1"/>
</dbReference>
<protein>
    <recommendedName>
        <fullName evidence="1">Large ribosomal subunit protein bL28</fullName>
    </recommendedName>
    <alternativeName>
        <fullName evidence="3">50S ribosomal protein L28</fullName>
    </alternativeName>
</protein>